<dbReference type="SMR" id="P0DQU3"/>
<dbReference type="GO" id="GO:0005576">
    <property type="term" value="C:extracellular region"/>
    <property type="evidence" value="ECO:0007669"/>
    <property type="project" value="UniProtKB-SubCell"/>
</dbReference>
<dbReference type="GO" id="GO:0015459">
    <property type="term" value="F:potassium channel regulator activity"/>
    <property type="evidence" value="ECO:0007669"/>
    <property type="project" value="UniProtKB-KW"/>
</dbReference>
<dbReference type="GO" id="GO:0090729">
    <property type="term" value="F:toxin activity"/>
    <property type="evidence" value="ECO:0007669"/>
    <property type="project" value="UniProtKB-KW"/>
</dbReference>
<reference key="1">
    <citation type="journal article" date="2018" name="Toxicon">
        <title>Venom characterization of the Amazonian scorpion Tityus metuendus.</title>
        <authorList>
            <person name="Batista C.V.F."/>
            <person name="Martins J.G."/>
            <person name="Restano-Cassulini R."/>
            <person name="Coronas F.I.V."/>
            <person name="Zamudio F.Z."/>
            <person name="Procopio R."/>
            <person name="Possani L.D."/>
        </authorList>
    </citation>
    <scope>PROTEIN SEQUENCE</scope>
    <scope>MASS SPECTROMETRY</scope>
    <scope>SUBCELLULAR LOCATION</scope>
    <source>
        <tissue>Venom</tissue>
    </source>
</reference>
<keyword id="KW-0903">Direct protein sequencing</keyword>
<keyword id="KW-1015">Disulfide bond</keyword>
<keyword id="KW-0872">Ion channel impairing toxin</keyword>
<keyword id="KW-0528">Neurotoxin</keyword>
<keyword id="KW-0632">Potassium channel impairing toxin</keyword>
<keyword id="KW-0964">Secreted</keyword>
<keyword id="KW-0800">Toxin</keyword>
<keyword id="KW-1220">Voltage-gated potassium channel impairing toxin</keyword>
<organism>
    <name type="scientific">Tityus metuendus</name>
    <name type="common">Scorpion</name>
    <dbReference type="NCBI Taxonomy" id="2203750"/>
    <lineage>
        <taxon>Eukaryota</taxon>
        <taxon>Metazoa</taxon>
        <taxon>Ecdysozoa</taxon>
        <taxon>Arthropoda</taxon>
        <taxon>Chelicerata</taxon>
        <taxon>Arachnida</taxon>
        <taxon>Scorpiones</taxon>
        <taxon>Buthida</taxon>
        <taxon>Buthoidea</taxon>
        <taxon>Buthidae</taxon>
        <taxon>Tityus</taxon>
    </lineage>
</organism>
<proteinExistence type="evidence at protein level"/>
<feature type="chain" id="PRO_0000455692" description="Potassium channel toxin" evidence="3">
    <location>
        <begin position="1"/>
        <end position="34"/>
    </location>
</feature>
<feature type="disulfide bond" evidence="2">
    <location>
        <begin position="6"/>
        <end position="25"/>
    </location>
</feature>
<feature type="disulfide bond" evidence="2">
    <location>
        <begin position="11"/>
        <end position="29"/>
    </location>
</feature>
<feature type="disulfide bond" evidence="2">
    <location>
        <begin position="15"/>
        <end position="31"/>
    </location>
</feature>
<protein>
    <recommendedName>
        <fullName evidence="4">Potassium channel toxin</fullName>
    </recommendedName>
</protein>
<evidence type="ECO:0000250" key="1">
    <source>
        <dbReference type="UniProtKB" id="P86270"/>
    </source>
</evidence>
<evidence type="ECO:0000250" key="2">
    <source>
        <dbReference type="UniProtKB" id="Q8I0L5"/>
    </source>
</evidence>
<evidence type="ECO:0000269" key="3">
    <source>
    </source>
</evidence>
<evidence type="ECO:0000305" key="4"/>
<evidence type="ECO:0000305" key="5">
    <source>
    </source>
</evidence>
<comment type="function">
    <text evidence="1">Toxin that blocks voltage-gated potassium channels (Kv).</text>
</comment>
<comment type="subcellular location">
    <subcellularLocation>
        <location evidence="3">Secreted</location>
    </subcellularLocation>
</comment>
<comment type="tissue specificity">
    <text evidence="5">Expressed by the venom gland.</text>
</comment>
<comment type="domain">
    <text evidence="1">Has the structural arrangement of an alpha-helix connected to antiparallel beta-sheets by disulfide bonds (CS-alpha/beta).</text>
</comment>
<comment type="mass spectrometry">
    <text>Average mass.</text>
</comment>
<comment type="similarity">
    <text evidence="4">Belongs to the short scorpion toxin superfamily. Potassium channel inhibitor family. Alpha-KTx 21 subfamily.</text>
</comment>
<accession>P0DQU3</accession>
<name>KAX_TITME</name>
<sequence>TPFRYCNPRNCAKECQGRGKETTYCDEVCKCSGW</sequence>